<protein>
    <recommendedName>
        <fullName evidence="1">Clustered mitochondria protein homolog</fullName>
    </recommendedName>
    <alternativeName>
        <fullName evidence="1">Protein TIF31 homolog</fullName>
    </alternativeName>
</protein>
<feature type="chain" id="PRO_0000366391" description="Clustered mitochondria protein homolog">
    <location>
        <begin position="1"/>
        <end position="1237"/>
    </location>
</feature>
<feature type="domain" description="Clu" evidence="2">
    <location>
        <begin position="291"/>
        <end position="535"/>
    </location>
</feature>
<feature type="repeat" description="TPR 1">
    <location>
        <begin position="957"/>
        <end position="990"/>
    </location>
</feature>
<feature type="repeat" description="TPR 2">
    <location>
        <begin position="999"/>
        <end position="1032"/>
    </location>
</feature>
<feature type="repeat" description="TPR 3">
    <location>
        <begin position="1041"/>
        <end position="1074"/>
    </location>
</feature>
<feature type="region of interest" description="Disordered" evidence="3">
    <location>
        <begin position="575"/>
        <end position="614"/>
    </location>
</feature>
<feature type="region of interest" description="Disordered" evidence="3">
    <location>
        <begin position="845"/>
        <end position="886"/>
    </location>
</feature>
<feature type="region of interest" description="Disordered" evidence="3">
    <location>
        <begin position="1152"/>
        <end position="1189"/>
    </location>
</feature>
<feature type="region of interest" description="Disordered" evidence="3">
    <location>
        <begin position="1201"/>
        <end position="1237"/>
    </location>
</feature>
<feature type="compositionally biased region" description="Basic and acidic residues" evidence="3">
    <location>
        <begin position="575"/>
        <end position="597"/>
    </location>
</feature>
<feature type="compositionally biased region" description="Basic and acidic residues" evidence="3">
    <location>
        <begin position="845"/>
        <end position="854"/>
    </location>
</feature>
<feature type="compositionally biased region" description="Polar residues" evidence="3">
    <location>
        <begin position="1156"/>
        <end position="1187"/>
    </location>
</feature>
<gene>
    <name evidence="1" type="primary">CLU1</name>
    <name evidence="1" type="synonym">TIF31</name>
    <name type="ORF">HCAG_06623</name>
</gene>
<sequence length="1237" mass="138090">MTEISVKLPHEPYNIQVTVSSQEQVQDVRQSIVELPGTFQYTSFHLEHNGTRINDYIELSEVKDIQANSEVVLVEDPYTEKEARMHVIRIRELIGAAGDRVDNLHGICAGLSLHDSVAAGEQLTDTKEGERGVVRDHALVDYDMTAPPVLQTILPRAQPSLPKTVKAISLSPWNPPPYHLRQRGHLLYLQVTTNEGEQHQITSHVSGFFVNKSSNAKFDPFPRPAPKNYSAHSLLTLISMLSPSFDASFKALQESNNKKDLLTTFPFQNSIPKNPWLVPPTSSAVTAHQSDITRSQENCLIFGVDNSETLRDWNEEFQSTRELPRETVQDKVSRERLTSKLFADYNDAAARGAVLVAKGEIAPLNPTEGKDAQIFVYNNIFFSFGADGVGTFASEGGDEAARVAVGKDVVGAKAVNQLDIPGLFTPGTVVVDYLGKRLVGQSIVPGIFKQREPGEHQIDYGGVEGKEVVAEHKDFVPVFEKLSASLRVKKHPVWDKEGKRHDLEGSVETKGLLGTDGRKYVLDLYRITPLDVAWSEDAEGHEPYPHRMSVLRLELVELYWRYKMGQYVKAEVQKRKTAKREAEKTKAVEAQNEDKAELLSTSDPGEGENKAVASEQERVDISAFKLALNPDVFSGQVPQTDEEKEEWAQDEKEVRSACDHLISKVIPELIQDLHDGDVGFPMDGESLTQLLHKRGINVRYLGKLAKLSQAKGQRLLALTALLIQEMVSRSFKHIANRYLRYLPSPFTASCVSHLLNCFLGAEVNSNPRPEIDEELREIYPEGDFSFEKVTPTSLKGDIEKQIKIRFRFNLEPKWTSSLKHLQLLRDISIKLGLQIGAREFAFERSQIKSQEHSPEPSSTHSSQDERGKRKKKKGSNSDSPSRVAASPRPVVTFVPEDILNIVPLVKDASPRSALAEEALEAGRISIMQNQKEIGQELILESLSLHEQIYGILHPEVAKLYHQLSMLYYQTDEKEAAVELARKAVIVTERTMGVDSADTILSYLNLSLFEHASGNTHTALIYIRHALELWKIIYGSHHPDSITTMNNAAVMLQHLKKYPDSRKWFEASLTVCEGLFGRQSINTATILFQLAQALALDQDSKAAVNRMRDAYNIFLNELGPNDRNTKEAESWLEQLTQNAVSIAKHAKDIQARRLRRTNLSPRMTIGTKPQPQVGQNAPATTNGATSKSIGLDSRSIDELLKFIEGGGESRSPRSKQKKRAAASNPKLRGSKQSTVQTA</sequence>
<proteinExistence type="inferred from homology"/>
<name>CLU_AJECN</name>
<dbReference type="EMBL" id="CH476660">
    <property type="protein sequence ID" value="EDN09456.1"/>
    <property type="molecule type" value="Genomic_DNA"/>
</dbReference>
<dbReference type="SMR" id="A6R8I2"/>
<dbReference type="STRING" id="339724.A6R8I2"/>
<dbReference type="KEGG" id="aje:HCAG_06623"/>
<dbReference type="VEuPathDB" id="FungiDB:HCAG_06623"/>
<dbReference type="HOGENOM" id="CLU_003256_2_0_1"/>
<dbReference type="OMA" id="HPVWDKD"/>
<dbReference type="OrthoDB" id="5652at299071"/>
<dbReference type="Proteomes" id="UP000009297">
    <property type="component" value="Unassembled WGS sequence"/>
</dbReference>
<dbReference type="GO" id="GO:0005737">
    <property type="term" value="C:cytoplasm"/>
    <property type="evidence" value="ECO:0007669"/>
    <property type="project" value="UniProtKB-SubCell"/>
</dbReference>
<dbReference type="GO" id="GO:0003729">
    <property type="term" value="F:mRNA binding"/>
    <property type="evidence" value="ECO:0007669"/>
    <property type="project" value="TreeGrafter"/>
</dbReference>
<dbReference type="GO" id="GO:0048312">
    <property type="term" value="P:intracellular distribution of mitochondria"/>
    <property type="evidence" value="ECO:0007669"/>
    <property type="project" value="TreeGrafter"/>
</dbReference>
<dbReference type="GO" id="GO:0007005">
    <property type="term" value="P:mitochondrion organization"/>
    <property type="evidence" value="ECO:0007669"/>
    <property type="project" value="UniProtKB-UniRule"/>
</dbReference>
<dbReference type="CDD" id="cd15466">
    <property type="entry name" value="CLU-central"/>
    <property type="match status" value="1"/>
</dbReference>
<dbReference type="FunFam" id="1.25.40.10:FF:000293">
    <property type="entry name" value="Clustered mitochondria protein homolog"/>
    <property type="match status" value="1"/>
</dbReference>
<dbReference type="FunFam" id="1.25.40.10:FF:000532">
    <property type="entry name" value="Clustered mitochondria protein homolog"/>
    <property type="match status" value="1"/>
</dbReference>
<dbReference type="Gene3D" id="1.25.40.10">
    <property type="entry name" value="Tetratricopeptide repeat domain"/>
    <property type="match status" value="2"/>
</dbReference>
<dbReference type="HAMAP" id="MF_03013">
    <property type="entry name" value="CLU"/>
    <property type="match status" value="1"/>
</dbReference>
<dbReference type="InterPro" id="IPR033646">
    <property type="entry name" value="CLU-central"/>
</dbReference>
<dbReference type="InterPro" id="IPR025697">
    <property type="entry name" value="CLU_dom"/>
</dbReference>
<dbReference type="InterPro" id="IPR028275">
    <property type="entry name" value="CLU_N"/>
</dbReference>
<dbReference type="InterPro" id="IPR027523">
    <property type="entry name" value="CLU_prot"/>
</dbReference>
<dbReference type="InterPro" id="IPR023231">
    <property type="entry name" value="GSKIP_dom_sf"/>
</dbReference>
<dbReference type="InterPro" id="IPR011990">
    <property type="entry name" value="TPR-like_helical_dom_sf"/>
</dbReference>
<dbReference type="InterPro" id="IPR019734">
    <property type="entry name" value="TPR_rpt"/>
</dbReference>
<dbReference type="PANTHER" id="PTHR12601:SF6">
    <property type="entry name" value="CLUSTERED MITOCHONDRIA PROTEIN HOMOLOG"/>
    <property type="match status" value="1"/>
</dbReference>
<dbReference type="PANTHER" id="PTHR12601">
    <property type="entry name" value="EUKARYOTIC TRANSLATION INITIATION FACTOR 3 SUBUNIT EIF-3"/>
    <property type="match status" value="1"/>
</dbReference>
<dbReference type="Pfam" id="PF13236">
    <property type="entry name" value="CLU"/>
    <property type="match status" value="1"/>
</dbReference>
<dbReference type="Pfam" id="PF15044">
    <property type="entry name" value="CLU_N"/>
    <property type="match status" value="1"/>
</dbReference>
<dbReference type="Pfam" id="PF12807">
    <property type="entry name" value="eIF3_p135"/>
    <property type="match status" value="1"/>
</dbReference>
<dbReference type="Pfam" id="PF13374">
    <property type="entry name" value="TPR_10"/>
    <property type="match status" value="2"/>
</dbReference>
<dbReference type="Pfam" id="PF13424">
    <property type="entry name" value="TPR_12"/>
    <property type="match status" value="1"/>
</dbReference>
<dbReference type="SUPFAM" id="SSF103107">
    <property type="entry name" value="Hypothetical protein c14orf129, hspc210"/>
    <property type="match status" value="1"/>
</dbReference>
<dbReference type="SUPFAM" id="SSF48452">
    <property type="entry name" value="TPR-like"/>
    <property type="match status" value="2"/>
</dbReference>
<dbReference type="PROSITE" id="PS51823">
    <property type="entry name" value="CLU"/>
    <property type="match status" value="1"/>
</dbReference>
<dbReference type="PROSITE" id="PS50005">
    <property type="entry name" value="TPR"/>
    <property type="match status" value="1"/>
</dbReference>
<evidence type="ECO:0000255" key="1">
    <source>
        <dbReference type="HAMAP-Rule" id="MF_03013"/>
    </source>
</evidence>
<evidence type="ECO:0000255" key="2">
    <source>
        <dbReference type="PROSITE-ProRule" id="PRU01167"/>
    </source>
</evidence>
<evidence type="ECO:0000256" key="3">
    <source>
        <dbReference type="SAM" id="MobiDB-lite"/>
    </source>
</evidence>
<reference key="1">
    <citation type="journal article" date="2009" name="Genome Res.">
        <title>Comparative genomic analyses of the human fungal pathogens Coccidioides and their relatives.</title>
        <authorList>
            <person name="Sharpton T.J."/>
            <person name="Stajich J.E."/>
            <person name="Rounsley S.D."/>
            <person name="Gardner M.J."/>
            <person name="Wortman J.R."/>
            <person name="Jordar V.S."/>
            <person name="Maiti R."/>
            <person name="Kodira C.D."/>
            <person name="Neafsey D.E."/>
            <person name="Zeng Q."/>
            <person name="Hung C.-Y."/>
            <person name="McMahan C."/>
            <person name="Muszewska A."/>
            <person name="Grynberg M."/>
            <person name="Mandel M.A."/>
            <person name="Kellner E.M."/>
            <person name="Barker B.M."/>
            <person name="Galgiani J.N."/>
            <person name="Orbach M.J."/>
            <person name="Kirkland T.N."/>
            <person name="Cole G.T."/>
            <person name="Henn M.R."/>
            <person name="Birren B.W."/>
            <person name="Taylor J.W."/>
        </authorList>
    </citation>
    <scope>NUCLEOTIDE SEQUENCE [LARGE SCALE GENOMIC DNA]</scope>
    <source>
        <strain>NAm1 / WU24</strain>
    </source>
</reference>
<keyword id="KW-0963">Cytoplasm</keyword>
<keyword id="KW-1185">Reference proteome</keyword>
<keyword id="KW-0677">Repeat</keyword>
<keyword id="KW-0802">TPR repeat</keyword>
<comment type="function">
    <text evidence="1">mRNA-binding protein involved in proper cytoplasmic distribution of mitochondria.</text>
</comment>
<comment type="subunit">
    <text evidence="1">May associate with the eukaryotic translation initiation factor 3 (eIF-3) complex.</text>
</comment>
<comment type="subcellular location">
    <subcellularLocation>
        <location evidence="1">Cytoplasm</location>
    </subcellularLocation>
</comment>
<comment type="similarity">
    <text evidence="1">Belongs to the CLU family.</text>
</comment>
<organism>
    <name type="scientific">Ajellomyces capsulatus (strain NAm1 / WU24)</name>
    <name type="common">Darling's disease fungus</name>
    <name type="synonym">Histoplasma capsulatum</name>
    <dbReference type="NCBI Taxonomy" id="2059318"/>
    <lineage>
        <taxon>Eukaryota</taxon>
        <taxon>Fungi</taxon>
        <taxon>Dikarya</taxon>
        <taxon>Ascomycota</taxon>
        <taxon>Pezizomycotina</taxon>
        <taxon>Eurotiomycetes</taxon>
        <taxon>Eurotiomycetidae</taxon>
        <taxon>Onygenales</taxon>
        <taxon>Ajellomycetaceae</taxon>
        <taxon>Histoplasma</taxon>
    </lineage>
</organism>
<accession>A6R8I2</accession>